<keyword id="KW-0963">Cytoplasm</keyword>
<keyword id="KW-0456">Lyase</keyword>
<keyword id="KW-0670">Pyruvate</keyword>
<keyword id="KW-0831">Ubiquinone biosynthesis</keyword>
<sequence>MSGNRDSILPPLEWLSAQHPPAPAAVSDWLMEPGSMTRRFERHCGRVHVEPQRECFVTRDQLGEEAEHLPDSPRYWLREVVLLGDNQPWLLGRTVIPLETLTGPDLALVDLGTLPLGRYLFSSDELTRDYIHIGRQDALWARRSRLRLAGKPLLLTELFLPASPLYATGSSVPE</sequence>
<evidence type="ECO:0000255" key="1">
    <source>
        <dbReference type="HAMAP-Rule" id="MF_01632"/>
    </source>
</evidence>
<gene>
    <name evidence="1" type="primary">ubiC</name>
    <name type="ordered locus">Spro_4464</name>
</gene>
<organism>
    <name type="scientific">Serratia proteamaculans (strain 568)</name>
    <dbReference type="NCBI Taxonomy" id="399741"/>
    <lineage>
        <taxon>Bacteria</taxon>
        <taxon>Pseudomonadati</taxon>
        <taxon>Pseudomonadota</taxon>
        <taxon>Gammaproteobacteria</taxon>
        <taxon>Enterobacterales</taxon>
        <taxon>Yersiniaceae</taxon>
        <taxon>Serratia</taxon>
    </lineage>
</organism>
<reference key="1">
    <citation type="submission" date="2007-09" db="EMBL/GenBank/DDBJ databases">
        <title>Complete sequence of chromosome of Serratia proteamaculans 568.</title>
        <authorList>
            <consortium name="US DOE Joint Genome Institute"/>
            <person name="Copeland A."/>
            <person name="Lucas S."/>
            <person name="Lapidus A."/>
            <person name="Barry K."/>
            <person name="Glavina del Rio T."/>
            <person name="Dalin E."/>
            <person name="Tice H."/>
            <person name="Pitluck S."/>
            <person name="Chain P."/>
            <person name="Malfatti S."/>
            <person name="Shin M."/>
            <person name="Vergez L."/>
            <person name="Schmutz J."/>
            <person name="Larimer F."/>
            <person name="Land M."/>
            <person name="Hauser L."/>
            <person name="Kyrpides N."/>
            <person name="Kim E."/>
            <person name="Taghavi S."/>
            <person name="Newman L."/>
            <person name="Vangronsveld J."/>
            <person name="van der Lelie D."/>
            <person name="Richardson P."/>
        </authorList>
    </citation>
    <scope>NUCLEOTIDE SEQUENCE [LARGE SCALE GENOMIC DNA]</scope>
    <source>
        <strain>568</strain>
    </source>
</reference>
<proteinExistence type="inferred from homology"/>
<name>UBIC_SERP5</name>
<accession>A8GKB8</accession>
<feature type="chain" id="PRO_1000069747" description="Chorismate pyruvate-lyase">
    <location>
        <begin position="1"/>
        <end position="174"/>
    </location>
</feature>
<feature type="binding site" evidence="1">
    <location>
        <position position="36"/>
    </location>
    <ligand>
        <name>substrate</name>
    </ligand>
</feature>
<feature type="binding site" evidence="1">
    <location>
        <position position="78"/>
    </location>
    <ligand>
        <name>substrate</name>
    </ligand>
</feature>
<feature type="binding site" evidence="1">
    <location>
        <position position="116"/>
    </location>
    <ligand>
        <name>substrate</name>
    </ligand>
</feature>
<feature type="binding site" evidence="1">
    <location>
        <position position="157"/>
    </location>
    <ligand>
        <name>substrate</name>
    </ligand>
</feature>
<comment type="function">
    <text evidence="1">Removes the pyruvyl group from chorismate, with concomitant aromatization of the ring, to provide 4-hydroxybenzoate (4HB) for the ubiquinone pathway.</text>
</comment>
<comment type="catalytic activity">
    <reaction evidence="1">
        <text>chorismate = 4-hydroxybenzoate + pyruvate</text>
        <dbReference type="Rhea" id="RHEA:16505"/>
        <dbReference type="ChEBI" id="CHEBI:15361"/>
        <dbReference type="ChEBI" id="CHEBI:17879"/>
        <dbReference type="ChEBI" id="CHEBI:29748"/>
        <dbReference type="EC" id="4.1.3.40"/>
    </reaction>
</comment>
<comment type="pathway">
    <text evidence="1">Cofactor biosynthesis; ubiquinone biosynthesis.</text>
</comment>
<comment type="subunit">
    <text evidence="1">Monomer.</text>
</comment>
<comment type="subcellular location">
    <subcellularLocation>
        <location evidence="1">Cytoplasm</location>
    </subcellularLocation>
</comment>
<comment type="similarity">
    <text evidence="1">Belongs to the UbiC family.</text>
</comment>
<dbReference type="EC" id="4.1.3.40" evidence="1"/>
<dbReference type="EMBL" id="CP000826">
    <property type="protein sequence ID" value="ABV43558.1"/>
    <property type="molecule type" value="Genomic_DNA"/>
</dbReference>
<dbReference type="SMR" id="A8GKB8"/>
<dbReference type="STRING" id="399741.Spro_4464"/>
<dbReference type="KEGG" id="spe:Spro_4464"/>
<dbReference type="eggNOG" id="COG3161">
    <property type="taxonomic scope" value="Bacteria"/>
</dbReference>
<dbReference type="HOGENOM" id="CLU_096824_1_0_6"/>
<dbReference type="OrthoDB" id="9789493at2"/>
<dbReference type="UniPathway" id="UPA00232"/>
<dbReference type="GO" id="GO:0005829">
    <property type="term" value="C:cytosol"/>
    <property type="evidence" value="ECO:0007669"/>
    <property type="project" value="TreeGrafter"/>
</dbReference>
<dbReference type="GO" id="GO:0008813">
    <property type="term" value="F:chorismate lyase activity"/>
    <property type="evidence" value="ECO:0007669"/>
    <property type="project" value="UniProtKB-UniRule"/>
</dbReference>
<dbReference type="GO" id="GO:0042866">
    <property type="term" value="P:pyruvate biosynthetic process"/>
    <property type="evidence" value="ECO:0007669"/>
    <property type="project" value="UniProtKB-UniRule"/>
</dbReference>
<dbReference type="GO" id="GO:0006744">
    <property type="term" value="P:ubiquinone biosynthetic process"/>
    <property type="evidence" value="ECO:0007669"/>
    <property type="project" value="UniProtKB-UniRule"/>
</dbReference>
<dbReference type="Gene3D" id="3.40.1410.10">
    <property type="entry name" value="Chorismate lyase-like"/>
    <property type="match status" value="1"/>
</dbReference>
<dbReference type="HAMAP" id="MF_01632">
    <property type="entry name" value="UbiC"/>
    <property type="match status" value="1"/>
</dbReference>
<dbReference type="InterPro" id="IPR007440">
    <property type="entry name" value="Chorismate--pyruvate_lyase"/>
</dbReference>
<dbReference type="InterPro" id="IPR028978">
    <property type="entry name" value="Chorismate_lyase_/UTRA_dom_sf"/>
</dbReference>
<dbReference type="NCBIfam" id="NF008656">
    <property type="entry name" value="PRK11655.1"/>
    <property type="match status" value="1"/>
</dbReference>
<dbReference type="PANTHER" id="PTHR38683">
    <property type="entry name" value="CHORISMATE PYRUVATE-LYASE"/>
    <property type="match status" value="1"/>
</dbReference>
<dbReference type="PANTHER" id="PTHR38683:SF1">
    <property type="entry name" value="CHORISMATE PYRUVATE-LYASE"/>
    <property type="match status" value="1"/>
</dbReference>
<dbReference type="Pfam" id="PF04345">
    <property type="entry name" value="Chor_lyase"/>
    <property type="match status" value="1"/>
</dbReference>
<dbReference type="SUPFAM" id="SSF64288">
    <property type="entry name" value="Chorismate lyase-like"/>
    <property type="match status" value="1"/>
</dbReference>
<protein>
    <recommendedName>
        <fullName evidence="1">Chorismate pyruvate-lyase</fullName>
        <shortName evidence="1">CL</shortName>
        <shortName evidence="1">CPL</shortName>
        <ecNumber evidence="1">4.1.3.40</ecNumber>
    </recommendedName>
</protein>